<keyword id="KW-0903">Direct protein sequencing</keyword>
<keyword id="KW-0349">Heme</keyword>
<keyword id="KW-0408">Iron</keyword>
<keyword id="KW-0479">Metal-binding</keyword>
<keyword id="KW-0561">Oxygen transport</keyword>
<keyword id="KW-0813">Transport</keyword>
<dbReference type="PIR" id="A02330">
    <property type="entry name" value="HAOSD"/>
</dbReference>
<dbReference type="SMR" id="P04242"/>
<dbReference type="GO" id="GO:0072562">
    <property type="term" value="C:blood microparticle"/>
    <property type="evidence" value="ECO:0007669"/>
    <property type="project" value="TreeGrafter"/>
</dbReference>
<dbReference type="GO" id="GO:0031838">
    <property type="term" value="C:haptoglobin-hemoglobin complex"/>
    <property type="evidence" value="ECO:0007669"/>
    <property type="project" value="TreeGrafter"/>
</dbReference>
<dbReference type="GO" id="GO:0005833">
    <property type="term" value="C:hemoglobin complex"/>
    <property type="evidence" value="ECO:0007669"/>
    <property type="project" value="InterPro"/>
</dbReference>
<dbReference type="GO" id="GO:0031720">
    <property type="term" value="F:haptoglobin binding"/>
    <property type="evidence" value="ECO:0007669"/>
    <property type="project" value="TreeGrafter"/>
</dbReference>
<dbReference type="GO" id="GO:0020037">
    <property type="term" value="F:heme binding"/>
    <property type="evidence" value="ECO:0007669"/>
    <property type="project" value="InterPro"/>
</dbReference>
<dbReference type="GO" id="GO:0005506">
    <property type="term" value="F:iron ion binding"/>
    <property type="evidence" value="ECO:0007669"/>
    <property type="project" value="InterPro"/>
</dbReference>
<dbReference type="GO" id="GO:0043177">
    <property type="term" value="F:organic acid binding"/>
    <property type="evidence" value="ECO:0007669"/>
    <property type="project" value="TreeGrafter"/>
</dbReference>
<dbReference type="GO" id="GO:0019825">
    <property type="term" value="F:oxygen binding"/>
    <property type="evidence" value="ECO:0007669"/>
    <property type="project" value="InterPro"/>
</dbReference>
<dbReference type="GO" id="GO:0005344">
    <property type="term" value="F:oxygen carrier activity"/>
    <property type="evidence" value="ECO:0007669"/>
    <property type="project" value="UniProtKB-KW"/>
</dbReference>
<dbReference type="GO" id="GO:0004601">
    <property type="term" value="F:peroxidase activity"/>
    <property type="evidence" value="ECO:0007669"/>
    <property type="project" value="TreeGrafter"/>
</dbReference>
<dbReference type="GO" id="GO:0042744">
    <property type="term" value="P:hydrogen peroxide catabolic process"/>
    <property type="evidence" value="ECO:0007669"/>
    <property type="project" value="TreeGrafter"/>
</dbReference>
<dbReference type="CDD" id="cd08927">
    <property type="entry name" value="Hb-alpha-like"/>
    <property type="match status" value="1"/>
</dbReference>
<dbReference type="FunFam" id="1.10.490.10:FF:000002">
    <property type="entry name" value="Hemoglobin subunit alpha"/>
    <property type="match status" value="1"/>
</dbReference>
<dbReference type="Gene3D" id="1.10.490.10">
    <property type="entry name" value="Globins"/>
    <property type="match status" value="1"/>
</dbReference>
<dbReference type="InterPro" id="IPR000971">
    <property type="entry name" value="Globin"/>
</dbReference>
<dbReference type="InterPro" id="IPR009050">
    <property type="entry name" value="Globin-like_sf"/>
</dbReference>
<dbReference type="InterPro" id="IPR012292">
    <property type="entry name" value="Globin/Proto"/>
</dbReference>
<dbReference type="InterPro" id="IPR002338">
    <property type="entry name" value="Hemoglobin_a-typ"/>
</dbReference>
<dbReference type="InterPro" id="IPR050056">
    <property type="entry name" value="Hemoglobin_oxygen_transport"/>
</dbReference>
<dbReference type="InterPro" id="IPR002339">
    <property type="entry name" value="Hemoglobin_pi"/>
</dbReference>
<dbReference type="PANTHER" id="PTHR11442">
    <property type="entry name" value="HEMOGLOBIN FAMILY MEMBER"/>
    <property type="match status" value="1"/>
</dbReference>
<dbReference type="PANTHER" id="PTHR11442:SF41">
    <property type="entry name" value="HEMOGLOBIN SUBUNIT ZETA"/>
    <property type="match status" value="1"/>
</dbReference>
<dbReference type="Pfam" id="PF00042">
    <property type="entry name" value="Globin"/>
    <property type="match status" value="1"/>
</dbReference>
<dbReference type="PRINTS" id="PR00612">
    <property type="entry name" value="ALPHAHAEM"/>
</dbReference>
<dbReference type="PRINTS" id="PR00815">
    <property type="entry name" value="PIHAEM"/>
</dbReference>
<dbReference type="SUPFAM" id="SSF46458">
    <property type="entry name" value="Globin-like"/>
    <property type="match status" value="1"/>
</dbReference>
<dbReference type="PROSITE" id="PS01033">
    <property type="entry name" value="GLOBIN"/>
    <property type="match status" value="1"/>
</dbReference>
<protein>
    <recommendedName>
        <fullName>Hemoglobin subunit alpha-D</fullName>
    </recommendedName>
    <alternativeName>
        <fullName>Alpha-D-globin</fullName>
    </alternativeName>
    <alternativeName>
        <fullName>Hemoglobin alpha-D chain</fullName>
    </alternativeName>
</protein>
<name>HBAD_STRCA</name>
<evidence type="ECO:0000255" key="1">
    <source>
        <dbReference type="PROSITE-ProRule" id="PRU00238"/>
    </source>
</evidence>
<organism>
    <name type="scientific">Struthio camelus</name>
    <name type="common">Common ostrich</name>
    <dbReference type="NCBI Taxonomy" id="8801"/>
    <lineage>
        <taxon>Eukaryota</taxon>
        <taxon>Metazoa</taxon>
        <taxon>Chordata</taxon>
        <taxon>Craniata</taxon>
        <taxon>Vertebrata</taxon>
        <taxon>Euteleostomi</taxon>
        <taxon>Archelosauria</taxon>
        <taxon>Archosauria</taxon>
        <taxon>Dinosauria</taxon>
        <taxon>Saurischia</taxon>
        <taxon>Theropoda</taxon>
        <taxon>Coelurosauria</taxon>
        <taxon>Aves</taxon>
        <taxon>Palaeognathae</taxon>
        <taxon>Struthioniformes</taxon>
        <taxon>Struthionidae</taxon>
        <taxon>Struthio</taxon>
    </lineage>
</organism>
<feature type="chain" id="PRO_0000052840" description="Hemoglobin subunit alpha-D">
    <location>
        <begin position="1"/>
        <end position="141"/>
    </location>
</feature>
<feature type="domain" description="Globin" evidence="1">
    <location>
        <begin position="1"/>
        <end position="141"/>
    </location>
</feature>
<feature type="binding site" description="distal binding residue">
    <location>
        <position position="58"/>
    </location>
    <ligand>
        <name>heme b</name>
        <dbReference type="ChEBI" id="CHEBI:60344"/>
    </ligand>
    <ligandPart>
        <name>Fe</name>
        <dbReference type="ChEBI" id="CHEBI:18248"/>
    </ligandPart>
</feature>
<feature type="binding site" description="proximal binding residue">
    <location>
        <position position="87"/>
    </location>
    <ligand>
        <name>heme b</name>
        <dbReference type="ChEBI" id="CHEBI:60344"/>
    </ligand>
    <ligandPart>
        <name>Fe</name>
        <dbReference type="ChEBI" id="CHEBI:18248"/>
    </ligandPart>
</feature>
<gene>
    <name type="primary">HBAD</name>
</gene>
<comment type="function">
    <text>Involved in oxygen transport from the lung to the various peripheral tissues.</text>
</comment>
<comment type="subunit">
    <text>Heterotetramer of two alpha-D chains and two beta chains.</text>
</comment>
<comment type="tissue specificity">
    <text>Red blood cells.</text>
</comment>
<comment type="developmental stage">
    <text>In birds, the alpha-D chain occurs in a minor hemoglobin component, called hemoglobin d, which is expressed in late embryonic and adult life.</text>
</comment>
<comment type="similarity">
    <text evidence="1">Belongs to the globin family.</text>
</comment>
<proteinExistence type="evidence at protein level"/>
<reference key="1">
    <citation type="journal article" date="1986" name="Biol. Chem. Hoppe-Seyler">
        <title>The expression of alpha D-chains in the hemoglobin of adult ostrich (Struthio camelus) and American rhea (Rhea americana). The different evolution of adult bird alpha A-, alpha D- and beta-chains.</title>
        <authorList>
            <person name="Oberthur W."/>
            <person name="Godovac-Zimmermann J."/>
            <person name="Braunitzer G."/>
        </authorList>
    </citation>
    <scope>PROTEIN SEQUENCE</scope>
</reference>
<accession>P04242</accession>
<sequence>MLTADDKKLIQQIWEKVGSHLEDFGAEALERMFITYPQTKTYFPHFDLHPGSEQIRGHGKKVANALGNAVKSLDNLSQALSELSNLHAYNLRVDPVNFKLLSQCFQVVLAVHMGKDYTPEVHAAYDKFLTAVAAVLAEKYR</sequence>